<protein>
    <recommendedName>
        <fullName evidence="1">Adenylate kinase</fullName>
        <shortName evidence="1">AK</shortName>
        <ecNumber evidence="1">2.7.4.3</ecNumber>
    </recommendedName>
    <alternativeName>
        <fullName evidence="1">ATP-AMP transphosphorylase</fullName>
    </alternativeName>
    <alternativeName>
        <fullName evidence="1">ATP:AMP phosphotransferase</fullName>
    </alternativeName>
    <alternativeName>
        <fullName evidence="1">Adenylate monophosphate kinase</fullName>
    </alternativeName>
</protein>
<comment type="function">
    <text evidence="1">Catalyzes the reversible transfer of the terminal phosphate group between ATP and AMP. Plays an important role in cellular energy homeostasis and in adenine nucleotide metabolism.</text>
</comment>
<comment type="catalytic activity">
    <reaction evidence="1">
        <text>AMP + ATP = 2 ADP</text>
        <dbReference type="Rhea" id="RHEA:12973"/>
        <dbReference type="ChEBI" id="CHEBI:30616"/>
        <dbReference type="ChEBI" id="CHEBI:456215"/>
        <dbReference type="ChEBI" id="CHEBI:456216"/>
        <dbReference type="EC" id="2.7.4.3"/>
    </reaction>
</comment>
<comment type="pathway">
    <text evidence="1">Purine metabolism; AMP biosynthesis via salvage pathway; AMP from ADP: step 1/1.</text>
</comment>
<comment type="subunit">
    <text evidence="1">Monomer.</text>
</comment>
<comment type="subcellular location">
    <subcellularLocation>
        <location evidence="1">Cytoplasm</location>
    </subcellularLocation>
</comment>
<comment type="domain">
    <text evidence="1">Consists of three domains, a large central CORE domain and two small peripheral domains, NMPbind and LID, which undergo movements during catalysis. The LID domain closes over the site of phosphoryl transfer upon ATP binding. Assembling and dissambling the active center during each catalytic cycle provides an effective means to prevent ATP hydrolysis.</text>
</comment>
<comment type="similarity">
    <text evidence="1">Belongs to the adenylate kinase family.</text>
</comment>
<reference key="1">
    <citation type="journal article" date="2009" name="BMC Genomics">
        <title>Metabolic analysis of the soil microbe Dechloromonas aromatica str. RCB: indications of a surprisingly complex life-style and cryptic anaerobic pathways for aromatic degradation.</title>
        <authorList>
            <person name="Salinero K.K."/>
            <person name="Keller K."/>
            <person name="Feil W.S."/>
            <person name="Feil H."/>
            <person name="Trong S."/>
            <person name="Di Bartolo G."/>
            <person name="Lapidus A."/>
        </authorList>
    </citation>
    <scope>NUCLEOTIDE SEQUENCE [LARGE SCALE GENOMIC DNA]</scope>
    <source>
        <strain>RCB</strain>
    </source>
</reference>
<gene>
    <name evidence="1" type="primary">adk</name>
    <name type="ordered locus">Daro_3205</name>
</gene>
<organism>
    <name type="scientific">Dechloromonas aromatica (strain RCB)</name>
    <dbReference type="NCBI Taxonomy" id="159087"/>
    <lineage>
        <taxon>Bacteria</taxon>
        <taxon>Pseudomonadati</taxon>
        <taxon>Pseudomonadota</taxon>
        <taxon>Betaproteobacteria</taxon>
        <taxon>Rhodocyclales</taxon>
        <taxon>Azonexaceae</taxon>
        <taxon>Dechloromonas</taxon>
    </lineage>
</organism>
<sequence length="217" mass="23516">MKLILLGAPGAGKGTQATFISKQFGIPQISTGDMLRAQVKAGTALGLEAKKHMDAGGLVPDAVIIGMVKDRLTQDDCKNGYLFDGFPRTIPQAQAMKDAGVPIEFVLEIDVPDSDIVERMAGRRAHLASGRTYHVKFNPPKVEGIDDVTGEPLVQRDDDKEETVKKRLEIYHSQTKPLVDFYGKWAAEGDAKAPKVRKVAGVGSVDNITKSVFEALK</sequence>
<accession>Q47B46</accession>
<feature type="chain" id="PRO_1000058820" description="Adenylate kinase">
    <location>
        <begin position="1"/>
        <end position="217"/>
    </location>
</feature>
<feature type="region of interest" description="NMP" evidence="1">
    <location>
        <begin position="30"/>
        <end position="59"/>
    </location>
</feature>
<feature type="region of interest" description="LID" evidence="1">
    <location>
        <begin position="122"/>
        <end position="159"/>
    </location>
</feature>
<feature type="binding site" evidence="1">
    <location>
        <begin position="10"/>
        <end position="15"/>
    </location>
    <ligand>
        <name>ATP</name>
        <dbReference type="ChEBI" id="CHEBI:30616"/>
    </ligand>
</feature>
<feature type="binding site" evidence="1">
    <location>
        <position position="31"/>
    </location>
    <ligand>
        <name>AMP</name>
        <dbReference type="ChEBI" id="CHEBI:456215"/>
    </ligand>
</feature>
<feature type="binding site" evidence="1">
    <location>
        <position position="36"/>
    </location>
    <ligand>
        <name>AMP</name>
        <dbReference type="ChEBI" id="CHEBI:456215"/>
    </ligand>
</feature>
<feature type="binding site" evidence="1">
    <location>
        <begin position="57"/>
        <end position="59"/>
    </location>
    <ligand>
        <name>AMP</name>
        <dbReference type="ChEBI" id="CHEBI:456215"/>
    </ligand>
</feature>
<feature type="binding site" evidence="1">
    <location>
        <begin position="85"/>
        <end position="88"/>
    </location>
    <ligand>
        <name>AMP</name>
        <dbReference type="ChEBI" id="CHEBI:456215"/>
    </ligand>
</feature>
<feature type="binding site" evidence="1">
    <location>
        <position position="92"/>
    </location>
    <ligand>
        <name>AMP</name>
        <dbReference type="ChEBI" id="CHEBI:456215"/>
    </ligand>
</feature>
<feature type="binding site" evidence="1">
    <location>
        <position position="123"/>
    </location>
    <ligand>
        <name>ATP</name>
        <dbReference type="ChEBI" id="CHEBI:30616"/>
    </ligand>
</feature>
<feature type="binding site" evidence="1">
    <location>
        <begin position="132"/>
        <end position="133"/>
    </location>
    <ligand>
        <name>ATP</name>
        <dbReference type="ChEBI" id="CHEBI:30616"/>
    </ligand>
</feature>
<feature type="binding site" evidence="1">
    <location>
        <position position="156"/>
    </location>
    <ligand>
        <name>AMP</name>
        <dbReference type="ChEBI" id="CHEBI:456215"/>
    </ligand>
</feature>
<feature type="binding site" evidence="1">
    <location>
        <position position="167"/>
    </location>
    <ligand>
        <name>AMP</name>
        <dbReference type="ChEBI" id="CHEBI:456215"/>
    </ligand>
</feature>
<feature type="binding site" evidence="1">
    <location>
        <position position="203"/>
    </location>
    <ligand>
        <name>ATP</name>
        <dbReference type="ChEBI" id="CHEBI:30616"/>
    </ligand>
</feature>
<keyword id="KW-0067">ATP-binding</keyword>
<keyword id="KW-0963">Cytoplasm</keyword>
<keyword id="KW-0418">Kinase</keyword>
<keyword id="KW-0545">Nucleotide biosynthesis</keyword>
<keyword id="KW-0547">Nucleotide-binding</keyword>
<keyword id="KW-0808">Transferase</keyword>
<dbReference type="EC" id="2.7.4.3" evidence="1"/>
<dbReference type="EMBL" id="CP000089">
    <property type="protein sequence ID" value="AAZ47935.1"/>
    <property type="molecule type" value="Genomic_DNA"/>
</dbReference>
<dbReference type="SMR" id="Q47B46"/>
<dbReference type="STRING" id="159087.Daro_3205"/>
<dbReference type="KEGG" id="dar:Daro_3205"/>
<dbReference type="eggNOG" id="COG0563">
    <property type="taxonomic scope" value="Bacteria"/>
</dbReference>
<dbReference type="HOGENOM" id="CLU_032354_1_2_4"/>
<dbReference type="OrthoDB" id="9805030at2"/>
<dbReference type="UniPathway" id="UPA00588">
    <property type="reaction ID" value="UER00649"/>
</dbReference>
<dbReference type="GO" id="GO:0005737">
    <property type="term" value="C:cytoplasm"/>
    <property type="evidence" value="ECO:0007669"/>
    <property type="project" value="UniProtKB-SubCell"/>
</dbReference>
<dbReference type="GO" id="GO:0004017">
    <property type="term" value="F:adenylate kinase activity"/>
    <property type="evidence" value="ECO:0007669"/>
    <property type="project" value="UniProtKB-UniRule"/>
</dbReference>
<dbReference type="GO" id="GO:0005524">
    <property type="term" value="F:ATP binding"/>
    <property type="evidence" value="ECO:0007669"/>
    <property type="project" value="UniProtKB-UniRule"/>
</dbReference>
<dbReference type="GO" id="GO:0044209">
    <property type="term" value="P:AMP salvage"/>
    <property type="evidence" value="ECO:0007669"/>
    <property type="project" value="UniProtKB-UniRule"/>
</dbReference>
<dbReference type="CDD" id="cd01428">
    <property type="entry name" value="ADK"/>
    <property type="match status" value="1"/>
</dbReference>
<dbReference type="FunFam" id="3.40.50.300:FF:000106">
    <property type="entry name" value="Adenylate kinase mitochondrial"/>
    <property type="match status" value="1"/>
</dbReference>
<dbReference type="Gene3D" id="3.40.50.300">
    <property type="entry name" value="P-loop containing nucleotide triphosphate hydrolases"/>
    <property type="match status" value="1"/>
</dbReference>
<dbReference type="HAMAP" id="MF_00235">
    <property type="entry name" value="Adenylate_kinase_Adk"/>
    <property type="match status" value="1"/>
</dbReference>
<dbReference type="InterPro" id="IPR006259">
    <property type="entry name" value="Adenyl_kin_sub"/>
</dbReference>
<dbReference type="InterPro" id="IPR000850">
    <property type="entry name" value="Adenylat/UMP-CMP_kin"/>
</dbReference>
<dbReference type="InterPro" id="IPR033690">
    <property type="entry name" value="Adenylat_kinase_CS"/>
</dbReference>
<dbReference type="InterPro" id="IPR007862">
    <property type="entry name" value="Adenylate_kinase_lid-dom"/>
</dbReference>
<dbReference type="InterPro" id="IPR027417">
    <property type="entry name" value="P-loop_NTPase"/>
</dbReference>
<dbReference type="NCBIfam" id="TIGR01351">
    <property type="entry name" value="adk"/>
    <property type="match status" value="1"/>
</dbReference>
<dbReference type="NCBIfam" id="NF001379">
    <property type="entry name" value="PRK00279.1-1"/>
    <property type="match status" value="1"/>
</dbReference>
<dbReference type="NCBIfam" id="NF001380">
    <property type="entry name" value="PRK00279.1-2"/>
    <property type="match status" value="1"/>
</dbReference>
<dbReference type="NCBIfam" id="NF001381">
    <property type="entry name" value="PRK00279.1-3"/>
    <property type="match status" value="1"/>
</dbReference>
<dbReference type="NCBIfam" id="NF011100">
    <property type="entry name" value="PRK14527.1"/>
    <property type="match status" value="1"/>
</dbReference>
<dbReference type="PANTHER" id="PTHR23359">
    <property type="entry name" value="NUCLEOTIDE KINASE"/>
    <property type="match status" value="1"/>
</dbReference>
<dbReference type="Pfam" id="PF00406">
    <property type="entry name" value="ADK"/>
    <property type="match status" value="1"/>
</dbReference>
<dbReference type="Pfam" id="PF05191">
    <property type="entry name" value="ADK_lid"/>
    <property type="match status" value="1"/>
</dbReference>
<dbReference type="PRINTS" id="PR00094">
    <property type="entry name" value="ADENYLTKNASE"/>
</dbReference>
<dbReference type="SUPFAM" id="SSF52540">
    <property type="entry name" value="P-loop containing nucleoside triphosphate hydrolases"/>
    <property type="match status" value="1"/>
</dbReference>
<dbReference type="PROSITE" id="PS00113">
    <property type="entry name" value="ADENYLATE_KINASE"/>
    <property type="match status" value="1"/>
</dbReference>
<evidence type="ECO:0000255" key="1">
    <source>
        <dbReference type="HAMAP-Rule" id="MF_00235"/>
    </source>
</evidence>
<proteinExistence type="inferred from homology"/>
<name>KAD_DECAR</name>